<organism>
    <name type="scientific">Acidovorax ebreus (strain TPSY)</name>
    <name type="common">Diaphorobacter sp. (strain TPSY)</name>
    <dbReference type="NCBI Taxonomy" id="535289"/>
    <lineage>
        <taxon>Bacteria</taxon>
        <taxon>Pseudomonadati</taxon>
        <taxon>Pseudomonadota</taxon>
        <taxon>Betaproteobacteria</taxon>
        <taxon>Burkholderiales</taxon>
        <taxon>Comamonadaceae</taxon>
        <taxon>Diaphorobacter</taxon>
    </lineage>
</organism>
<protein>
    <recommendedName>
        <fullName evidence="1">Bis(5'-nucleosyl)-tetraphosphatase, symmetrical</fullName>
        <ecNumber evidence="1">3.6.1.41</ecNumber>
    </recommendedName>
    <alternativeName>
        <fullName evidence="1">Ap4A hydrolase</fullName>
    </alternativeName>
    <alternativeName>
        <fullName evidence="1">Diadenosine 5',5'''-P1,P4-tetraphosphate pyrophosphohydrolase</fullName>
    </alternativeName>
    <alternativeName>
        <fullName evidence="1">Diadenosine tetraphosphatase</fullName>
    </alternativeName>
</protein>
<keyword id="KW-0378">Hydrolase</keyword>
<keyword id="KW-1185">Reference proteome</keyword>
<sequence length="281" mass="31034">MALYCVGDIQGCDDAFERLLATIGFSPSRDTLYVLGDLVNRGPHSAAVLRRCITLGDSVRPLLGNHDLHLLAAAYGTRRPSRRDTLQDILLAPDRDEMLEWLRHQPLARRVHHGGGDLLMVHAGVLPQWTAEETLAYAGEVEAVLQSREFAGFLQQMYGNSPDLWSPELQGTDRLRVIVNALTRMRFCSPEGRMDFESTESASEAPPGLVPWFDAPGRRTLNTLIAFGHWSTLGWLDRADVLGLDTGCVWGGCLSAVRFGTTLADRERCHVECPQAQMPGA</sequence>
<evidence type="ECO:0000255" key="1">
    <source>
        <dbReference type="HAMAP-Rule" id="MF_00199"/>
    </source>
</evidence>
<feature type="chain" id="PRO_1000124449" description="Bis(5'-nucleosyl)-tetraphosphatase, symmetrical">
    <location>
        <begin position="1"/>
        <end position="281"/>
    </location>
</feature>
<dbReference type="EC" id="3.6.1.41" evidence="1"/>
<dbReference type="EMBL" id="CP001392">
    <property type="protein sequence ID" value="ACM32541.1"/>
    <property type="molecule type" value="Genomic_DNA"/>
</dbReference>
<dbReference type="RefSeq" id="WP_015912765.1">
    <property type="nucleotide sequence ID" value="NC_011992.1"/>
</dbReference>
<dbReference type="SMR" id="B9MFH8"/>
<dbReference type="KEGG" id="dia:Dtpsy_1064"/>
<dbReference type="eggNOG" id="COG0639">
    <property type="taxonomic scope" value="Bacteria"/>
</dbReference>
<dbReference type="HOGENOM" id="CLU_056184_1_0_4"/>
<dbReference type="Proteomes" id="UP000000450">
    <property type="component" value="Chromosome"/>
</dbReference>
<dbReference type="GO" id="GO:0008803">
    <property type="term" value="F:bis(5'-nucleosyl)-tetraphosphatase (symmetrical) activity"/>
    <property type="evidence" value="ECO:0007669"/>
    <property type="project" value="UniProtKB-UniRule"/>
</dbReference>
<dbReference type="CDD" id="cd07422">
    <property type="entry name" value="MPP_ApaH"/>
    <property type="match status" value="1"/>
</dbReference>
<dbReference type="Gene3D" id="3.60.21.10">
    <property type="match status" value="1"/>
</dbReference>
<dbReference type="HAMAP" id="MF_00199">
    <property type="entry name" value="ApaH"/>
    <property type="match status" value="1"/>
</dbReference>
<dbReference type="InterPro" id="IPR004617">
    <property type="entry name" value="ApaH"/>
</dbReference>
<dbReference type="InterPro" id="IPR004843">
    <property type="entry name" value="Calcineurin-like_PHP_ApaH"/>
</dbReference>
<dbReference type="InterPro" id="IPR029052">
    <property type="entry name" value="Metallo-depent_PP-like"/>
</dbReference>
<dbReference type="NCBIfam" id="TIGR00668">
    <property type="entry name" value="apaH"/>
    <property type="match status" value="1"/>
</dbReference>
<dbReference type="NCBIfam" id="NF001204">
    <property type="entry name" value="PRK00166.1"/>
    <property type="match status" value="1"/>
</dbReference>
<dbReference type="PANTHER" id="PTHR40942">
    <property type="match status" value="1"/>
</dbReference>
<dbReference type="PANTHER" id="PTHR40942:SF4">
    <property type="entry name" value="CYTOCHROME C5"/>
    <property type="match status" value="1"/>
</dbReference>
<dbReference type="Pfam" id="PF00149">
    <property type="entry name" value="Metallophos"/>
    <property type="match status" value="1"/>
</dbReference>
<dbReference type="PIRSF" id="PIRSF000903">
    <property type="entry name" value="B5n-ttraPtase_sm"/>
    <property type="match status" value="1"/>
</dbReference>
<dbReference type="SUPFAM" id="SSF56300">
    <property type="entry name" value="Metallo-dependent phosphatases"/>
    <property type="match status" value="1"/>
</dbReference>
<reference key="1">
    <citation type="submission" date="2009-01" db="EMBL/GenBank/DDBJ databases">
        <title>Complete sequence of Diaphorobacter sp. TPSY.</title>
        <authorList>
            <consortium name="US DOE Joint Genome Institute"/>
            <person name="Lucas S."/>
            <person name="Copeland A."/>
            <person name="Lapidus A."/>
            <person name="Glavina del Rio T."/>
            <person name="Tice H."/>
            <person name="Bruce D."/>
            <person name="Goodwin L."/>
            <person name="Pitluck S."/>
            <person name="Chertkov O."/>
            <person name="Brettin T."/>
            <person name="Detter J.C."/>
            <person name="Han C."/>
            <person name="Larimer F."/>
            <person name="Land M."/>
            <person name="Hauser L."/>
            <person name="Kyrpides N."/>
            <person name="Mikhailova N."/>
            <person name="Coates J.D."/>
        </authorList>
    </citation>
    <scope>NUCLEOTIDE SEQUENCE [LARGE SCALE GENOMIC DNA]</scope>
    <source>
        <strain>TPSY</strain>
    </source>
</reference>
<name>APAH_ACIET</name>
<gene>
    <name evidence="1" type="primary">apaH</name>
    <name type="ordered locus">Dtpsy_1064</name>
</gene>
<accession>B9MFH8</accession>
<proteinExistence type="inferred from homology"/>
<comment type="function">
    <text evidence="1">Hydrolyzes diadenosine 5',5'''-P1,P4-tetraphosphate to yield ADP.</text>
</comment>
<comment type="catalytic activity">
    <reaction evidence="1">
        <text>P(1),P(4)-bis(5'-adenosyl) tetraphosphate + H2O = 2 ADP + 2 H(+)</text>
        <dbReference type="Rhea" id="RHEA:24252"/>
        <dbReference type="ChEBI" id="CHEBI:15377"/>
        <dbReference type="ChEBI" id="CHEBI:15378"/>
        <dbReference type="ChEBI" id="CHEBI:58141"/>
        <dbReference type="ChEBI" id="CHEBI:456216"/>
        <dbReference type="EC" id="3.6.1.41"/>
    </reaction>
</comment>
<comment type="similarity">
    <text evidence="1">Belongs to the Ap4A hydrolase family.</text>
</comment>